<protein>
    <recommendedName>
        <fullName>Glutamate receptor ionotropic, kainate 3</fullName>
        <shortName>GluK3</shortName>
    </recommendedName>
    <alternativeName>
        <fullName>Glutamate receptor 7</fullName>
        <shortName>GluR-7</shortName>
        <shortName>GluR7</shortName>
    </alternativeName>
</protein>
<accession>Q38PU2</accession>
<keyword id="KW-1003">Cell membrane</keyword>
<keyword id="KW-1015">Disulfide bond</keyword>
<keyword id="KW-0325">Glycoprotein</keyword>
<keyword id="KW-0407">Ion channel</keyword>
<keyword id="KW-0406">Ion transport</keyword>
<keyword id="KW-1017">Isopeptide bond</keyword>
<keyword id="KW-1071">Ligand-gated ion channel</keyword>
<keyword id="KW-0472">Membrane</keyword>
<keyword id="KW-0597">Phosphoprotein</keyword>
<keyword id="KW-0628">Postsynaptic cell membrane</keyword>
<keyword id="KW-0675">Receptor</keyword>
<keyword id="KW-1185">Reference proteome</keyword>
<keyword id="KW-0732">Signal</keyword>
<keyword id="KW-0770">Synapse</keyword>
<keyword id="KW-0812">Transmembrane</keyword>
<keyword id="KW-1133">Transmembrane helix</keyword>
<keyword id="KW-0813">Transport</keyword>
<keyword id="KW-0832">Ubl conjugation</keyword>
<feature type="signal peptide" evidence="4">
    <location>
        <begin position="1"/>
        <end position="31"/>
    </location>
</feature>
<feature type="chain" id="PRO_0000271757" description="Glutamate receptor ionotropic, kainate 3">
    <location>
        <begin position="32"/>
        <end position="919"/>
    </location>
</feature>
<feature type="topological domain" description="Extracellular" evidence="4">
    <location>
        <begin position="32"/>
        <end position="563"/>
    </location>
</feature>
<feature type="transmembrane region" description="Helical" evidence="4">
    <location>
        <begin position="564"/>
        <end position="584"/>
    </location>
</feature>
<feature type="topological domain" description="Cytoplasmic" evidence="4">
    <location>
        <begin position="585"/>
        <end position="636"/>
    </location>
</feature>
<feature type="transmembrane region" description="Helical" evidence="4">
    <location>
        <begin position="637"/>
        <end position="657"/>
    </location>
</feature>
<feature type="topological domain" description="Extracellular" evidence="4">
    <location>
        <begin position="658"/>
        <end position="820"/>
    </location>
</feature>
<feature type="transmembrane region" description="Helical" evidence="4">
    <location>
        <begin position="821"/>
        <end position="841"/>
    </location>
</feature>
<feature type="topological domain" description="Cytoplasmic" evidence="4">
    <location>
        <begin position="842"/>
        <end position="919"/>
    </location>
</feature>
<feature type="binding site" evidence="2">
    <location>
        <position position="518"/>
    </location>
    <ligand>
        <name>L-glutamate</name>
        <dbReference type="ChEBI" id="CHEBI:29985"/>
    </ligand>
</feature>
<feature type="binding site" evidence="2">
    <location>
        <position position="520"/>
    </location>
    <ligand>
        <name>L-glutamate</name>
        <dbReference type="ChEBI" id="CHEBI:29985"/>
    </ligand>
</feature>
<feature type="binding site" evidence="2">
    <location>
        <position position="525"/>
    </location>
    <ligand>
        <name>L-glutamate</name>
        <dbReference type="ChEBI" id="CHEBI:29985"/>
    </ligand>
</feature>
<feature type="binding site" evidence="2">
    <location>
        <position position="691"/>
    </location>
    <ligand>
        <name>L-glutamate</name>
        <dbReference type="ChEBI" id="CHEBI:29985"/>
    </ligand>
</feature>
<feature type="binding site" evidence="2">
    <location>
        <position position="692"/>
    </location>
    <ligand>
        <name>L-glutamate</name>
        <dbReference type="ChEBI" id="CHEBI:29985"/>
    </ligand>
</feature>
<feature type="binding site" evidence="2">
    <location>
        <position position="739"/>
    </location>
    <ligand>
        <name>L-glutamate</name>
        <dbReference type="ChEBI" id="CHEBI:29985"/>
    </ligand>
</feature>
<feature type="modified residue" description="Phosphoserine" evidence="3">
    <location>
        <position position="869"/>
    </location>
</feature>
<feature type="glycosylation site" description="N-linked (GlcNAc...) asparagine" evidence="4">
    <location>
        <position position="70"/>
    </location>
</feature>
<feature type="glycosylation site" description="N-linked (GlcNAc...) asparagine" evidence="4">
    <location>
        <position position="76"/>
    </location>
</feature>
<feature type="glycosylation site" description="N-linked (GlcNAc...) asparagine" evidence="4">
    <location>
        <position position="278"/>
    </location>
</feature>
<feature type="glycosylation site" description="N-linked (GlcNAc...) asparagine" evidence="4">
    <location>
        <position position="381"/>
    </location>
</feature>
<feature type="glycosylation site" description="N-linked (GlcNAc...) asparagine" evidence="4">
    <location>
        <position position="415"/>
    </location>
</feature>
<feature type="glycosylation site" description="N-linked (GlcNAc...) asparagine" evidence="4">
    <location>
        <position position="426"/>
    </location>
</feature>
<feature type="glycosylation site" description="N-linked (GlcNAc...) asparagine" evidence="4">
    <location>
        <position position="433"/>
    </location>
</feature>
<feature type="glycosylation site" description="N-linked (GlcNAc...) asparagine" evidence="4">
    <location>
        <position position="548"/>
    </location>
</feature>
<feature type="glycosylation site" description="N-linked (GlcNAc...) asparagine" evidence="4">
    <location>
        <position position="551"/>
    </location>
</feature>
<feature type="glycosylation site" description="N-linked (GlcNAc...) asparagine" evidence="4">
    <location>
        <position position="752"/>
    </location>
</feature>
<feature type="disulfide bond" evidence="2">
    <location>
        <begin position="99"/>
        <end position="350"/>
    </location>
</feature>
<feature type="cross-link" description="Glycyl lysine isopeptide (Lys-Gly) (interchain with G-Cter in SUMO1)" evidence="3">
    <location>
        <position position="887"/>
    </location>
</feature>
<comment type="function">
    <text evidence="1">Ionotropic glutamate receptor that functions as a cation-permeable ligand-gated ion channel, gated by L-glutamate and the glutamatergic agonist kainic acid. Binding of the excitatory neurotransmitter L-glutamate induces a conformation change, leading to the opening of the cation channel, and thereby converts the chemical signal to an electrical impulse. The receptor then desensitizes rapidly and enters a transient inactive state, characterized by the presence of bound agonist. In association with GRIK2, involved in presynaptic facilitation of glutamate release at hippocampal mossy fiber synapses.</text>
</comment>
<comment type="catalytic activity">
    <reaction evidence="1">
        <text>Ca(2+)(in) = Ca(2+)(out)</text>
        <dbReference type="Rhea" id="RHEA:29671"/>
        <dbReference type="ChEBI" id="CHEBI:29108"/>
    </reaction>
</comment>
<comment type="subunit">
    <text evidence="1 2">Homotetramer, and heterotetramer with either GRIK4 or GRIK5. Can form functional heteromeric receptors with GRIK2. Interacts with PRKCABP. Interacts with NETO2.</text>
</comment>
<comment type="subcellular location">
    <subcellularLocation>
        <location evidence="2">Cell membrane</location>
        <topology evidence="4">Multi-pass membrane protein</topology>
    </subcellularLocation>
    <subcellularLocation>
        <location evidence="2">Postsynaptic cell membrane</location>
        <topology evidence="4">Multi-pass membrane protein</topology>
    </subcellularLocation>
</comment>
<comment type="miscellaneous">
    <text evidence="2">The postsynaptic actions of Glu are mediated by a variety of receptors that are named according to their selective agonists. This receptor binds domoate &gt; kainate &gt;&gt; L-glutamate = quisqualate &gt;&gt; AMPA = NMDA.</text>
</comment>
<comment type="similarity">
    <text evidence="5">Belongs to the glutamate-gated ion channel (TC 1.A.10.1) family. GRIK3 subfamily.</text>
</comment>
<reference key="1">
    <citation type="journal article" date="2006" name="Mol. Vis.">
        <title>Expression and sequences of genes encoding glutamate receptors and transporters in primate retina determined using 3'-end amplification polymerase chain reaction.</title>
        <authorList>
            <person name="Hanna M.C."/>
            <person name="Calkins D.J."/>
        </authorList>
    </citation>
    <scope>NUCLEOTIDE SEQUENCE [MRNA]</scope>
    <source>
        <tissue>Retina</tissue>
    </source>
</reference>
<evidence type="ECO:0000250" key="1">
    <source>
        <dbReference type="UniProtKB" id="B1AS29"/>
    </source>
</evidence>
<evidence type="ECO:0000250" key="2">
    <source>
        <dbReference type="UniProtKB" id="P42264"/>
    </source>
</evidence>
<evidence type="ECO:0000250" key="3">
    <source>
        <dbReference type="UniProtKB" id="Q13002"/>
    </source>
</evidence>
<evidence type="ECO:0000255" key="4"/>
<evidence type="ECO:0000305" key="5"/>
<organism>
    <name type="scientific">Macaca fascicularis</name>
    <name type="common">Crab-eating macaque</name>
    <name type="synonym">Cynomolgus monkey</name>
    <dbReference type="NCBI Taxonomy" id="9541"/>
    <lineage>
        <taxon>Eukaryota</taxon>
        <taxon>Metazoa</taxon>
        <taxon>Chordata</taxon>
        <taxon>Craniata</taxon>
        <taxon>Vertebrata</taxon>
        <taxon>Euteleostomi</taxon>
        <taxon>Mammalia</taxon>
        <taxon>Eutheria</taxon>
        <taxon>Euarchontoglires</taxon>
        <taxon>Primates</taxon>
        <taxon>Haplorrhini</taxon>
        <taxon>Catarrhini</taxon>
        <taxon>Cercopithecidae</taxon>
        <taxon>Cercopithecinae</taxon>
        <taxon>Macaca</taxon>
    </lineage>
</organism>
<sequence>MTAPWRRLRSLVWEYWAGLLVCAFWIPDSRGMPHVIRIGGIFEYADGPNAQVMNAEEHAFRFSANIINRNRTLLPNTTLTYDIQRIHFHDSFEATKKACDQLALGVVAIFGPSQGSCTNAVQSICNALEVPHIQLRWKHHPLDNKDTFYVNLYPDYASLSHAILDLVQYLKWRSATVVYDDSTGLIRLQELIMAPSRYNIRLKIRQLPVDSDDSRPLLKEMKRGREFRIIFDCSHTMAAQILKQAMAMGMMTEYYHFIFTTLDLYALDLEPYRYSGVNLTGFRILNVDNPHVSAIVEKWSMERLQAAPRAESGLLDGVMMTDAALLYDAVHIVSVCYQRAPQMTVNSLQCHRHKAWRFGGRFMNFIKEAQWEGLTGRIVFNKTSGLRTDFDLDIISLKEDGLEKVGVWSPADGLNITEVAKGRGPNVTDSLTNRSLIVTTVLEEPFVMFRKSDRTLYGNDRFEGYCIDLLKELAHILGFSYEIRLVEDGKYGAQDDKGQWNGMVKELIDHKADLAVAPLTITHVREKAIDFSKPFMTLGVSILYRKPNGTNPSVFSFLNPLSPDIWMYVLLAYLGVSCVLFVIARFSPYEWYDAHPCNPGSEVVENNFTLLNSFWFGMGSLMQQGSELMPKALSTRIIGGIWWFFTLIIISSYTANLAAFLTVERMESPIDSADDLAKQTKIEYGAVKDGATMTFFKKSKISTFEKMWAFMSSKPSALVKNNEEGIQRALTADYALLMESTTIEYVTQRNCNLTQIGGLIDSKGYGIGTPMGSPYRDKITIAILQLQEEDKLHIMKEKWWRGSGCPEEENKEASALGIQKIGGIFIVLAAGLVLSVLVAVGEFVYKLRKTAEREQRSFCSTVADEIRFSLTCQRRVKHKPQPPMMVKTDAVINMHTFNDRRLPGKDSMACSTSLAPVFP</sequence>
<gene>
    <name type="primary">GRIK3</name>
    <name type="synonym">GLUR7</name>
</gene>
<name>GRIK3_MACFA</name>
<proteinExistence type="evidence at transcript level"/>
<dbReference type="EMBL" id="DQ159935">
    <property type="protein sequence ID" value="ABA47259.1"/>
    <property type="molecule type" value="mRNA"/>
</dbReference>
<dbReference type="RefSeq" id="NP_001306368.1">
    <property type="nucleotide sequence ID" value="NM_001319439.1"/>
</dbReference>
<dbReference type="RefSeq" id="XP_045230305.1">
    <property type="nucleotide sequence ID" value="XM_045374370.2"/>
</dbReference>
<dbReference type="SMR" id="Q38PU2"/>
<dbReference type="STRING" id="9541.ENSMFAP00000005796"/>
<dbReference type="GlyCosmos" id="Q38PU2">
    <property type="glycosylation" value="10 sites, No reported glycans"/>
</dbReference>
<dbReference type="Ensembl" id="ENSMFAT00000024482.2">
    <property type="protein sequence ID" value="ENSMFAP00000005802.2"/>
    <property type="gene ID" value="ENSMFAG00000002477.2"/>
</dbReference>
<dbReference type="GeneID" id="102130684"/>
<dbReference type="eggNOG" id="KOG1052">
    <property type="taxonomic scope" value="Eukaryota"/>
</dbReference>
<dbReference type="GeneTree" id="ENSGT00940000159465"/>
<dbReference type="Proteomes" id="UP000233100">
    <property type="component" value="Chromosome 1"/>
</dbReference>
<dbReference type="Bgee" id="ENSMFAG00000002477">
    <property type="expression patterns" value="Expressed in frontal cortex and 6 other cell types or tissues"/>
</dbReference>
<dbReference type="GO" id="GO:0043197">
    <property type="term" value="C:dendritic spine"/>
    <property type="evidence" value="ECO:0000314"/>
    <property type="project" value="UniProtKB"/>
</dbReference>
<dbReference type="GO" id="GO:0098978">
    <property type="term" value="C:glutamatergic synapse"/>
    <property type="evidence" value="ECO:0007669"/>
    <property type="project" value="Ensembl"/>
</dbReference>
<dbReference type="GO" id="GO:0098839">
    <property type="term" value="C:postsynaptic density membrane"/>
    <property type="evidence" value="ECO:0007669"/>
    <property type="project" value="Ensembl"/>
</dbReference>
<dbReference type="GO" id="GO:0001640">
    <property type="term" value="F:adenylate cyclase inhibiting G protein-coupled glutamate receptor activity"/>
    <property type="evidence" value="ECO:0000250"/>
    <property type="project" value="UniProtKB"/>
</dbReference>
<dbReference type="GO" id="GO:0022849">
    <property type="term" value="F:glutamate-gated calcium ion channel activity"/>
    <property type="evidence" value="ECO:0007669"/>
    <property type="project" value="Ensembl"/>
</dbReference>
<dbReference type="GO" id="GO:0004970">
    <property type="term" value="F:glutamate-gated receptor activity"/>
    <property type="evidence" value="ECO:0000250"/>
    <property type="project" value="UniProtKB"/>
</dbReference>
<dbReference type="GO" id="GO:0015277">
    <property type="term" value="F:kainate selective glutamate receptor activity"/>
    <property type="evidence" value="ECO:0007669"/>
    <property type="project" value="Ensembl"/>
</dbReference>
<dbReference type="GO" id="GO:0099507">
    <property type="term" value="F:ligand-gated monoatomic ion channel activity involved in regulation of presynaptic membrane potential"/>
    <property type="evidence" value="ECO:0007669"/>
    <property type="project" value="Ensembl"/>
</dbReference>
<dbReference type="GO" id="GO:0007216">
    <property type="term" value="P:G protein-coupled glutamate receptor signaling pathway"/>
    <property type="evidence" value="ECO:0000250"/>
    <property type="project" value="UniProtKB"/>
</dbReference>
<dbReference type="CDD" id="cd06382">
    <property type="entry name" value="PBP1_iGluR_Kainate"/>
    <property type="match status" value="1"/>
</dbReference>
<dbReference type="CDD" id="cd13723">
    <property type="entry name" value="PBP2_iGluR_Kainate_GluR7"/>
    <property type="match status" value="1"/>
</dbReference>
<dbReference type="FunFam" id="3.40.50.2300:FF:000010">
    <property type="entry name" value="Glutamate ionotropic receptor kainate type subunit 1"/>
    <property type="match status" value="1"/>
</dbReference>
<dbReference type="FunFam" id="3.40.190.10:FF:000210">
    <property type="entry name" value="Glutamate receptor ionotropic, kainate 1"/>
    <property type="match status" value="1"/>
</dbReference>
<dbReference type="FunFam" id="3.40.190.10:FF:000240">
    <property type="entry name" value="Glutamate receptor ionotropic, kainate 2"/>
    <property type="match status" value="1"/>
</dbReference>
<dbReference type="FunFam" id="1.10.287.70:FF:000010">
    <property type="entry name" value="Putative glutamate receptor ionotropic kainate 1"/>
    <property type="match status" value="1"/>
</dbReference>
<dbReference type="Gene3D" id="1.10.287.70">
    <property type="match status" value="1"/>
</dbReference>
<dbReference type="Gene3D" id="3.40.50.2300">
    <property type="match status" value="2"/>
</dbReference>
<dbReference type="Gene3D" id="3.40.190.10">
    <property type="entry name" value="Periplasmic binding protein-like II"/>
    <property type="match status" value="1"/>
</dbReference>
<dbReference type="InterPro" id="IPR001828">
    <property type="entry name" value="ANF_lig-bd_rcpt"/>
</dbReference>
<dbReference type="InterPro" id="IPR019594">
    <property type="entry name" value="Glu/Gly-bd"/>
</dbReference>
<dbReference type="InterPro" id="IPR001508">
    <property type="entry name" value="Iono_Glu_rcpt_met"/>
</dbReference>
<dbReference type="InterPro" id="IPR015683">
    <property type="entry name" value="Ionotropic_Glu_rcpt"/>
</dbReference>
<dbReference type="InterPro" id="IPR001320">
    <property type="entry name" value="Iontro_rcpt_C"/>
</dbReference>
<dbReference type="InterPro" id="IPR028082">
    <property type="entry name" value="Peripla_BP_I"/>
</dbReference>
<dbReference type="PANTHER" id="PTHR18966">
    <property type="entry name" value="IONOTROPIC GLUTAMATE RECEPTOR"/>
    <property type="match status" value="1"/>
</dbReference>
<dbReference type="Pfam" id="PF01094">
    <property type="entry name" value="ANF_receptor"/>
    <property type="match status" value="1"/>
</dbReference>
<dbReference type="Pfam" id="PF00060">
    <property type="entry name" value="Lig_chan"/>
    <property type="match status" value="1"/>
</dbReference>
<dbReference type="Pfam" id="PF10613">
    <property type="entry name" value="Lig_chan-Glu_bd"/>
    <property type="match status" value="1"/>
</dbReference>
<dbReference type="PRINTS" id="PR00177">
    <property type="entry name" value="NMDARECEPTOR"/>
</dbReference>
<dbReference type="SMART" id="SM00918">
    <property type="entry name" value="Lig_chan-Glu_bd"/>
    <property type="match status" value="1"/>
</dbReference>
<dbReference type="SMART" id="SM00079">
    <property type="entry name" value="PBPe"/>
    <property type="match status" value="1"/>
</dbReference>
<dbReference type="SUPFAM" id="SSF53822">
    <property type="entry name" value="Periplasmic binding protein-like I"/>
    <property type="match status" value="1"/>
</dbReference>
<dbReference type="SUPFAM" id="SSF53850">
    <property type="entry name" value="Periplasmic binding protein-like II"/>
    <property type="match status" value="1"/>
</dbReference>